<protein>
    <recommendedName>
        <fullName evidence="1">Tat proofreading chaperone DmsD</fullName>
    </recommendedName>
    <alternativeName>
        <fullName evidence="1">DMSO reductase maturation protein</fullName>
    </alternativeName>
    <alternativeName>
        <fullName evidence="1">Twin-arginine leader-binding protein DmsD</fullName>
    </alternativeName>
</protein>
<name>DMSD_SALPA</name>
<feature type="chain" id="PRO_0000211652" description="Tat proofreading chaperone DmsD">
    <location>
        <begin position="1"/>
        <end position="204"/>
    </location>
</feature>
<sequence length="204" mass="23451">MTTFLQRDDFAVTARVLGALFYYSPESHETAPLVQALLNDDWQAQWPLDAEALAPVAVMFKTHSEESLPQAWQRLFIGPYALPSPPWGSVWLDRESVLFGDSTLALRQWMRENGIQFEMQQNEPEDHFGSLLLLAAWLAENGRHHECEQLLAWHLFPWSSRFLDVFIDHAGHPFYQALGQLARLTLAQWQAQLIIPVAVKPLFR</sequence>
<reference key="1">
    <citation type="journal article" date="2004" name="Nat. Genet.">
        <title>Comparison of genome degradation in Paratyphi A and Typhi, human-restricted serovars of Salmonella enterica that cause typhoid.</title>
        <authorList>
            <person name="McClelland M."/>
            <person name="Sanderson K.E."/>
            <person name="Clifton S.W."/>
            <person name="Latreille P."/>
            <person name="Porwollik S."/>
            <person name="Sabo A."/>
            <person name="Meyer R."/>
            <person name="Bieri T."/>
            <person name="Ozersky P."/>
            <person name="McLellan M."/>
            <person name="Harkins C.R."/>
            <person name="Wang C."/>
            <person name="Nguyen C."/>
            <person name="Berghoff A."/>
            <person name="Elliott G."/>
            <person name="Kohlberg S."/>
            <person name="Strong C."/>
            <person name="Du F."/>
            <person name="Carter J."/>
            <person name="Kremizki C."/>
            <person name="Layman D."/>
            <person name="Leonard S."/>
            <person name="Sun H."/>
            <person name="Fulton L."/>
            <person name="Nash W."/>
            <person name="Miner T."/>
            <person name="Minx P."/>
            <person name="Delehaunty K."/>
            <person name="Fronick C."/>
            <person name="Magrini V."/>
            <person name="Nhan M."/>
            <person name="Warren W."/>
            <person name="Florea L."/>
            <person name="Spieth J."/>
            <person name="Wilson R.K."/>
        </authorList>
    </citation>
    <scope>NUCLEOTIDE SEQUENCE [LARGE SCALE GENOMIC DNA]</scope>
    <source>
        <strain>ATCC 9150 / SARB42</strain>
    </source>
</reference>
<evidence type="ECO:0000255" key="1">
    <source>
        <dbReference type="HAMAP-Rule" id="MF_00940"/>
    </source>
</evidence>
<accession>Q5PHH8</accession>
<keyword id="KW-0143">Chaperone</keyword>
<organism>
    <name type="scientific">Salmonella paratyphi A (strain ATCC 9150 / SARB42)</name>
    <dbReference type="NCBI Taxonomy" id="295319"/>
    <lineage>
        <taxon>Bacteria</taxon>
        <taxon>Pseudomonadati</taxon>
        <taxon>Pseudomonadota</taxon>
        <taxon>Gammaproteobacteria</taxon>
        <taxon>Enterobacterales</taxon>
        <taxon>Enterobacteriaceae</taxon>
        <taxon>Salmonella</taxon>
    </lineage>
</organism>
<gene>
    <name evidence="1" type="primary">dmsD</name>
    <name type="ordered locus">SPA1359</name>
</gene>
<comment type="function">
    <text evidence="1">Required for biogenesis/assembly of DMSO reductase, but not for the interaction of the DmsA signal peptide with the Tat system. May be part of a chaperone cascade complex that facilitates a folding-maturation pathway for the substrate protein.</text>
</comment>
<comment type="similarity">
    <text evidence="1">Belongs to the TorD/DmsD family. DmsD subfamily.</text>
</comment>
<dbReference type="EMBL" id="CP000026">
    <property type="protein sequence ID" value="AAV77304.1"/>
    <property type="molecule type" value="Genomic_DNA"/>
</dbReference>
<dbReference type="RefSeq" id="WP_000206563.1">
    <property type="nucleotide sequence ID" value="NC_006511.1"/>
</dbReference>
<dbReference type="SMR" id="Q5PHH8"/>
<dbReference type="KEGG" id="spt:SPA1359"/>
<dbReference type="HOGENOM" id="CLU_077650_7_1_6"/>
<dbReference type="Proteomes" id="UP000008185">
    <property type="component" value="Chromosome"/>
</dbReference>
<dbReference type="GO" id="GO:0005048">
    <property type="term" value="F:signal sequence binding"/>
    <property type="evidence" value="ECO:0007669"/>
    <property type="project" value="InterPro"/>
</dbReference>
<dbReference type="GO" id="GO:0061077">
    <property type="term" value="P:chaperone-mediated protein folding"/>
    <property type="evidence" value="ECO:0007669"/>
    <property type="project" value="UniProtKB-UniRule"/>
</dbReference>
<dbReference type="Gene3D" id="1.10.3480.10">
    <property type="entry name" value="TorD-like"/>
    <property type="match status" value="1"/>
</dbReference>
<dbReference type="HAMAP" id="MF_00940">
    <property type="entry name" value="DmsD_chaperone"/>
    <property type="match status" value="1"/>
</dbReference>
<dbReference type="InterPro" id="IPR026269">
    <property type="entry name" value="DmsD-type"/>
</dbReference>
<dbReference type="InterPro" id="IPR028611">
    <property type="entry name" value="DmsD_chaperone"/>
</dbReference>
<dbReference type="InterPro" id="IPR020945">
    <property type="entry name" value="DMSO/NO3_reduct_chaperone"/>
</dbReference>
<dbReference type="InterPro" id="IPR036411">
    <property type="entry name" value="TorD-like_sf"/>
</dbReference>
<dbReference type="InterPro" id="IPR050289">
    <property type="entry name" value="TorD/DmsD_chaperones"/>
</dbReference>
<dbReference type="NCBIfam" id="NF008632">
    <property type="entry name" value="PRK11621.1"/>
    <property type="match status" value="1"/>
</dbReference>
<dbReference type="PANTHER" id="PTHR34227">
    <property type="entry name" value="CHAPERONE PROTEIN YCDY"/>
    <property type="match status" value="1"/>
</dbReference>
<dbReference type="PANTHER" id="PTHR34227:SF6">
    <property type="entry name" value="TAT PROOFREADING CHAPERONE DMSD"/>
    <property type="match status" value="1"/>
</dbReference>
<dbReference type="Pfam" id="PF02613">
    <property type="entry name" value="Nitrate_red_del"/>
    <property type="match status" value="1"/>
</dbReference>
<dbReference type="PIRSF" id="PIRSF004690">
    <property type="entry name" value="DmsD"/>
    <property type="match status" value="1"/>
</dbReference>
<dbReference type="SUPFAM" id="SSF89155">
    <property type="entry name" value="TorD-like"/>
    <property type="match status" value="1"/>
</dbReference>
<proteinExistence type="inferred from homology"/>